<sequence length="252" mass="27737">MISIDLNCDLGEGFGAYQIGNDDAILPFVSSVNIACGFHAGDPSIMRQTVEKALQHDVEIGAHPGFPDLIGFGRRIIGVSPDEVYNYVVYQIGALDGFVRAAGGKMHHVKPHGALYNMAATNLEIAEAIARAIHDINPKLYLYGLANSAFIQAVKKYELRLVQEAFADRTYQPDGTLTSRTEKYALIKNEETAIHQVLQMVQEGKIKAMDGTVITMHPQTICLHGDGEKAVQFAERIYRTFRLNGIFVCAPK</sequence>
<proteinExistence type="inferred from homology"/>
<reference key="1">
    <citation type="journal article" date="2008" name="Chem. Biol. Interact.">
        <title>Extending the Bacillus cereus group genomics to putative food-borne pathogens of different toxicity.</title>
        <authorList>
            <person name="Lapidus A."/>
            <person name="Goltsman E."/>
            <person name="Auger S."/>
            <person name="Galleron N."/>
            <person name="Segurens B."/>
            <person name="Dossat C."/>
            <person name="Land M.L."/>
            <person name="Broussolle V."/>
            <person name="Brillard J."/>
            <person name="Guinebretiere M.-H."/>
            <person name="Sanchis V."/>
            <person name="Nguen-the C."/>
            <person name="Lereclus D."/>
            <person name="Richardson P."/>
            <person name="Wincker P."/>
            <person name="Weissenbach J."/>
            <person name="Ehrlich S.D."/>
            <person name="Sorokin A."/>
        </authorList>
    </citation>
    <scope>NUCLEOTIDE SEQUENCE [LARGE SCALE GENOMIC DNA]</scope>
    <source>
        <strain>DSM 22905 / CIP 110041 / 391-98 / NVH 391-98</strain>
    </source>
</reference>
<organism>
    <name type="scientific">Bacillus cytotoxicus (strain DSM 22905 / CIP 110041 / 391-98 / NVH 391-98)</name>
    <dbReference type="NCBI Taxonomy" id="315749"/>
    <lineage>
        <taxon>Bacteria</taxon>
        <taxon>Bacillati</taxon>
        <taxon>Bacillota</taxon>
        <taxon>Bacilli</taxon>
        <taxon>Bacillales</taxon>
        <taxon>Bacillaceae</taxon>
        <taxon>Bacillus</taxon>
        <taxon>Bacillus cereus group</taxon>
    </lineage>
</organism>
<feature type="chain" id="PRO_1000083116" description="5-oxoprolinase subunit A">
    <location>
        <begin position="1"/>
        <end position="252"/>
    </location>
</feature>
<dbReference type="EC" id="3.5.2.9" evidence="1"/>
<dbReference type="EMBL" id="CP000764">
    <property type="protein sequence ID" value="ABS22326.1"/>
    <property type="molecule type" value="Genomic_DNA"/>
</dbReference>
<dbReference type="RefSeq" id="WP_012094519.1">
    <property type="nucleotide sequence ID" value="NC_009674.1"/>
</dbReference>
<dbReference type="SMR" id="A7GQB8"/>
<dbReference type="STRING" id="315749.Bcer98_2060"/>
<dbReference type="GeneID" id="33897352"/>
<dbReference type="KEGG" id="bcy:Bcer98_2060"/>
<dbReference type="eggNOG" id="COG1540">
    <property type="taxonomic scope" value="Bacteria"/>
</dbReference>
<dbReference type="HOGENOM" id="CLU_069535_0_0_9"/>
<dbReference type="OrthoDB" id="9773478at2"/>
<dbReference type="Proteomes" id="UP000002300">
    <property type="component" value="Chromosome"/>
</dbReference>
<dbReference type="GO" id="GO:0017168">
    <property type="term" value="F:5-oxoprolinase (ATP-hydrolyzing) activity"/>
    <property type="evidence" value="ECO:0007669"/>
    <property type="project" value="UniProtKB-UniRule"/>
</dbReference>
<dbReference type="GO" id="GO:0005524">
    <property type="term" value="F:ATP binding"/>
    <property type="evidence" value="ECO:0007669"/>
    <property type="project" value="UniProtKB-UniRule"/>
</dbReference>
<dbReference type="GO" id="GO:0005975">
    <property type="term" value="P:carbohydrate metabolic process"/>
    <property type="evidence" value="ECO:0007669"/>
    <property type="project" value="InterPro"/>
</dbReference>
<dbReference type="CDD" id="cd10787">
    <property type="entry name" value="LamB_YcsF_like"/>
    <property type="match status" value="1"/>
</dbReference>
<dbReference type="Gene3D" id="3.20.20.370">
    <property type="entry name" value="Glycoside hydrolase/deacetylase"/>
    <property type="match status" value="1"/>
</dbReference>
<dbReference type="HAMAP" id="MF_00691">
    <property type="entry name" value="PxpA"/>
    <property type="match status" value="1"/>
</dbReference>
<dbReference type="InterPro" id="IPR011330">
    <property type="entry name" value="Glyco_hydro/deAcase_b/a-brl"/>
</dbReference>
<dbReference type="InterPro" id="IPR005501">
    <property type="entry name" value="LamB/YcsF/PxpA-like"/>
</dbReference>
<dbReference type="NCBIfam" id="NF003813">
    <property type="entry name" value="PRK05406.1-2"/>
    <property type="match status" value="1"/>
</dbReference>
<dbReference type="NCBIfam" id="NF003814">
    <property type="entry name" value="PRK05406.1-3"/>
    <property type="match status" value="1"/>
</dbReference>
<dbReference type="NCBIfam" id="NF003816">
    <property type="entry name" value="PRK05406.1-5"/>
    <property type="match status" value="1"/>
</dbReference>
<dbReference type="PANTHER" id="PTHR30292:SF0">
    <property type="entry name" value="5-OXOPROLINASE SUBUNIT A"/>
    <property type="match status" value="1"/>
</dbReference>
<dbReference type="PANTHER" id="PTHR30292">
    <property type="entry name" value="UNCHARACTERIZED PROTEIN YBGL-RELATED"/>
    <property type="match status" value="1"/>
</dbReference>
<dbReference type="Pfam" id="PF03746">
    <property type="entry name" value="LamB_YcsF"/>
    <property type="match status" value="1"/>
</dbReference>
<dbReference type="SUPFAM" id="SSF88713">
    <property type="entry name" value="Glycoside hydrolase/deacetylase"/>
    <property type="match status" value="1"/>
</dbReference>
<accession>A7GQB8</accession>
<gene>
    <name evidence="1" type="primary">pxpA</name>
    <name type="ordered locus">Bcer98_2060</name>
</gene>
<name>PXPA_BACCN</name>
<comment type="function">
    <text evidence="1">Catalyzes the cleavage of 5-oxoproline to form L-glutamate coupled to the hydrolysis of ATP to ADP and inorganic phosphate.</text>
</comment>
<comment type="catalytic activity">
    <reaction evidence="1">
        <text>5-oxo-L-proline + ATP + 2 H2O = L-glutamate + ADP + phosphate + H(+)</text>
        <dbReference type="Rhea" id="RHEA:10348"/>
        <dbReference type="ChEBI" id="CHEBI:15377"/>
        <dbReference type="ChEBI" id="CHEBI:15378"/>
        <dbReference type="ChEBI" id="CHEBI:29985"/>
        <dbReference type="ChEBI" id="CHEBI:30616"/>
        <dbReference type="ChEBI" id="CHEBI:43474"/>
        <dbReference type="ChEBI" id="CHEBI:58402"/>
        <dbReference type="ChEBI" id="CHEBI:456216"/>
        <dbReference type="EC" id="3.5.2.9"/>
    </reaction>
</comment>
<comment type="subunit">
    <text evidence="1">Forms a complex composed of PxpA, PxpB and PxpC.</text>
</comment>
<comment type="similarity">
    <text evidence="1">Belongs to the LamB/PxpA family.</text>
</comment>
<protein>
    <recommendedName>
        <fullName evidence="1">5-oxoprolinase subunit A</fullName>
        <shortName evidence="1">5-OPase subunit A</shortName>
        <ecNumber evidence="1">3.5.2.9</ecNumber>
    </recommendedName>
    <alternativeName>
        <fullName evidence="1">5-oxoprolinase (ATP-hydrolyzing) subunit A</fullName>
    </alternativeName>
</protein>
<keyword id="KW-0067">ATP-binding</keyword>
<keyword id="KW-0378">Hydrolase</keyword>
<keyword id="KW-0547">Nucleotide-binding</keyword>
<evidence type="ECO:0000255" key="1">
    <source>
        <dbReference type="HAMAP-Rule" id="MF_00691"/>
    </source>
</evidence>